<gene>
    <name evidence="5" type="primary">Bcdin3d</name>
</gene>
<protein>
    <recommendedName>
        <fullName evidence="4">RNA 5'-monophosphate methyltransferase</fullName>
        <ecNumber evidence="1">2.1.1.-</ecNumber>
    </recommendedName>
    <alternativeName>
        <fullName>BCDIN3 domain-containing protein</fullName>
    </alternativeName>
</protein>
<name>BN3D2_RAT</name>
<reference key="1">
    <citation type="journal article" date="2004" name="Nature">
        <title>Genome sequence of the Brown Norway rat yields insights into mammalian evolution.</title>
        <authorList>
            <person name="Gibbs R.A."/>
            <person name="Weinstock G.M."/>
            <person name="Metzker M.L."/>
            <person name="Muzny D.M."/>
            <person name="Sodergren E.J."/>
            <person name="Scherer S."/>
            <person name="Scott G."/>
            <person name="Steffen D."/>
            <person name="Worley K.C."/>
            <person name="Burch P.E."/>
            <person name="Okwuonu G."/>
            <person name="Hines S."/>
            <person name="Lewis L."/>
            <person name="Deramo C."/>
            <person name="Delgado O."/>
            <person name="Dugan-Rocha S."/>
            <person name="Miner G."/>
            <person name="Morgan M."/>
            <person name="Hawes A."/>
            <person name="Gill R."/>
            <person name="Holt R.A."/>
            <person name="Adams M.D."/>
            <person name="Amanatides P.G."/>
            <person name="Baden-Tillson H."/>
            <person name="Barnstead M."/>
            <person name="Chin S."/>
            <person name="Evans C.A."/>
            <person name="Ferriera S."/>
            <person name="Fosler C."/>
            <person name="Glodek A."/>
            <person name="Gu Z."/>
            <person name="Jennings D."/>
            <person name="Kraft C.L."/>
            <person name="Nguyen T."/>
            <person name="Pfannkoch C.M."/>
            <person name="Sitter C."/>
            <person name="Sutton G.G."/>
            <person name="Venter J.C."/>
            <person name="Woodage T."/>
            <person name="Smith D."/>
            <person name="Lee H.-M."/>
            <person name="Gustafson E."/>
            <person name="Cahill P."/>
            <person name="Kana A."/>
            <person name="Doucette-Stamm L."/>
            <person name="Weinstock K."/>
            <person name="Fechtel K."/>
            <person name="Weiss R.B."/>
            <person name="Dunn D.M."/>
            <person name="Green E.D."/>
            <person name="Blakesley R.W."/>
            <person name="Bouffard G.G."/>
            <person name="De Jong P.J."/>
            <person name="Osoegawa K."/>
            <person name="Zhu B."/>
            <person name="Marra M."/>
            <person name="Schein J."/>
            <person name="Bosdet I."/>
            <person name="Fjell C."/>
            <person name="Jones S."/>
            <person name="Krzywinski M."/>
            <person name="Mathewson C."/>
            <person name="Siddiqui A."/>
            <person name="Wye N."/>
            <person name="McPherson J."/>
            <person name="Zhao S."/>
            <person name="Fraser C.M."/>
            <person name="Shetty J."/>
            <person name="Shatsman S."/>
            <person name="Geer K."/>
            <person name="Chen Y."/>
            <person name="Abramzon S."/>
            <person name="Nierman W.C."/>
            <person name="Havlak P.H."/>
            <person name="Chen R."/>
            <person name="Durbin K.J."/>
            <person name="Egan A."/>
            <person name="Ren Y."/>
            <person name="Song X.-Z."/>
            <person name="Li B."/>
            <person name="Liu Y."/>
            <person name="Qin X."/>
            <person name="Cawley S."/>
            <person name="Cooney A.J."/>
            <person name="D'Souza L.M."/>
            <person name="Martin K."/>
            <person name="Wu J.Q."/>
            <person name="Gonzalez-Garay M.L."/>
            <person name="Jackson A.R."/>
            <person name="Kalafus K.J."/>
            <person name="McLeod M.P."/>
            <person name="Milosavljevic A."/>
            <person name="Virk D."/>
            <person name="Volkov A."/>
            <person name="Wheeler D.A."/>
            <person name="Zhang Z."/>
            <person name="Bailey J.A."/>
            <person name="Eichler E.E."/>
            <person name="Tuzun E."/>
            <person name="Birney E."/>
            <person name="Mongin E."/>
            <person name="Ureta-Vidal A."/>
            <person name="Woodwark C."/>
            <person name="Zdobnov E."/>
            <person name="Bork P."/>
            <person name="Suyama M."/>
            <person name="Torrents D."/>
            <person name="Alexandersson M."/>
            <person name="Trask B.J."/>
            <person name="Young J.M."/>
            <person name="Huang H."/>
            <person name="Wang H."/>
            <person name="Xing H."/>
            <person name="Daniels S."/>
            <person name="Gietzen D."/>
            <person name="Schmidt J."/>
            <person name="Stevens K."/>
            <person name="Vitt U."/>
            <person name="Wingrove J."/>
            <person name="Camara F."/>
            <person name="Mar Alba M."/>
            <person name="Abril J.F."/>
            <person name="Guigo R."/>
            <person name="Smit A."/>
            <person name="Dubchak I."/>
            <person name="Rubin E.M."/>
            <person name="Couronne O."/>
            <person name="Poliakov A."/>
            <person name="Huebner N."/>
            <person name="Ganten D."/>
            <person name="Goesele C."/>
            <person name="Hummel O."/>
            <person name="Kreitler T."/>
            <person name="Lee Y.-A."/>
            <person name="Monti J."/>
            <person name="Schulz H."/>
            <person name="Zimdahl H."/>
            <person name="Himmelbauer H."/>
            <person name="Lehrach H."/>
            <person name="Jacob H.J."/>
            <person name="Bromberg S."/>
            <person name="Gullings-Handley J."/>
            <person name="Jensen-Seaman M.I."/>
            <person name="Kwitek A.E."/>
            <person name="Lazar J."/>
            <person name="Pasko D."/>
            <person name="Tonellato P.J."/>
            <person name="Twigger S."/>
            <person name="Ponting C.P."/>
            <person name="Duarte J.M."/>
            <person name="Rice S."/>
            <person name="Goodstadt L."/>
            <person name="Beatson S.A."/>
            <person name="Emes R.D."/>
            <person name="Winter E.E."/>
            <person name="Webber C."/>
            <person name="Brandt P."/>
            <person name="Nyakatura G."/>
            <person name="Adetobi M."/>
            <person name="Chiaromonte F."/>
            <person name="Elnitski L."/>
            <person name="Eswara P."/>
            <person name="Hardison R.C."/>
            <person name="Hou M."/>
            <person name="Kolbe D."/>
            <person name="Makova K."/>
            <person name="Miller W."/>
            <person name="Nekrutenko A."/>
            <person name="Riemer C."/>
            <person name="Schwartz S."/>
            <person name="Taylor J."/>
            <person name="Yang S."/>
            <person name="Zhang Y."/>
            <person name="Lindpaintner K."/>
            <person name="Andrews T.D."/>
            <person name="Caccamo M."/>
            <person name="Clamp M."/>
            <person name="Clarke L."/>
            <person name="Curwen V."/>
            <person name="Durbin R.M."/>
            <person name="Eyras E."/>
            <person name="Searle S.M."/>
            <person name="Cooper G.M."/>
            <person name="Batzoglou S."/>
            <person name="Brudno M."/>
            <person name="Sidow A."/>
            <person name="Stone E.A."/>
            <person name="Payseur B.A."/>
            <person name="Bourque G."/>
            <person name="Lopez-Otin C."/>
            <person name="Puente X.S."/>
            <person name="Chakrabarti K."/>
            <person name="Chatterji S."/>
            <person name="Dewey C."/>
            <person name="Pachter L."/>
            <person name="Bray N."/>
            <person name="Yap V.B."/>
            <person name="Caspi A."/>
            <person name="Tesler G."/>
            <person name="Pevzner P.A."/>
            <person name="Haussler D."/>
            <person name="Roskin K.M."/>
            <person name="Baertsch R."/>
            <person name="Clawson H."/>
            <person name="Furey T.S."/>
            <person name="Hinrichs A.S."/>
            <person name="Karolchik D."/>
            <person name="Kent W.J."/>
            <person name="Rosenbloom K.R."/>
            <person name="Trumbower H."/>
            <person name="Weirauch M."/>
            <person name="Cooper D.N."/>
            <person name="Stenson P.D."/>
            <person name="Ma B."/>
            <person name="Brent M."/>
            <person name="Arumugam M."/>
            <person name="Shteynberg D."/>
            <person name="Copley R.R."/>
            <person name="Taylor M.S."/>
            <person name="Riethman H."/>
            <person name="Mudunuri U."/>
            <person name="Peterson J."/>
            <person name="Guyer M."/>
            <person name="Felsenfeld A."/>
            <person name="Old S."/>
            <person name="Mockrin S."/>
            <person name="Collins F.S."/>
        </authorList>
    </citation>
    <scope>NUCLEOTIDE SEQUENCE [LARGE SCALE GENOMIC DNA]</scope>
    <source>
        <strain>Brown Norway</strain>
    </source>
</reference>
<reference key="2">
    <citation type="submission" date="2005-07" db="EMBL/GenBank/DDBJ databases">
        <authorList>
            <person name="Mural R.J."/>
            <person name="Adams M.D."/>
            <person name="Myers E.W."/>
            <person name="Smith H.O."/>
            <person name="Venter J.C."/>
        </authorList>
    </citation>
    <scope>NUCLEOTIDE SEQUENCE [LARGE SCALE GENOMIC DNA]</scope>
    <source>
        <strain>Brown Norway</strain>
    </source>
</reference>
<feature type="chain" id="PRO_0000420469" description="RNA 5'-monophosphate methyltransferase">
    <location>
        <begin position="1"/>
        <end position="285"/>
    </location>
</feature>
<feature type="domain" description="Bin3-type SAM" evidence="2">
    <location>
        <begin position="53"/>
        <end position="275"/>
    </location>
</feature>
<feature type="region of interest" description="Disordered" evidence="3">
    <location>
        <begin position="1"/>
        <end position="28"/>
    </location>
</feature>
<feature type="binding site" evidence="1">
    <location>
        <position position="46"/>
    </location>
    <ligand>
        <name>S-adenosyl-L-methionine</name>
        <dbReference type="ChEBI" id="CHEBI:59789"/>
    </ligand>
</feature>
<feature type="binding site" evidence="1">
    <location>
        <position position="77"/>
    </location>
    <ligand>
        <name>S-adenosyl-L-methionine</name>
        <dbReference type="ChEBI" id="CHEBI:59789"/>
    </ligand>
</feature>
<feature type="binding site" evidence="1">
    <location>
        <position position="111"/>
    </location>
    <ligand>
        <name>S-adenosyl-L-methionine</name>
        <dbReference type="ChEBI" id="CHEBI:59789"/>
    </ligand>
</feature>
<feature type="binding site" evidence="1">
    <location>
        <begin position="136"/>
        <end position="137"/>
    </location>
    <ligand>
        <name>S-adenosyl-L-methionine</name>
        <dbReference type="ChEBI" id="CHEBI:59789"/>
    </ligand>
</feature>
<feature type="binding site" evidence="1">
    <location>
        <position position="165"/>
    </location>
    <ligand>
        <name>S-adenosyl-L-methionine</name>
        <dbReference type="ChEBI" id="CHEBI:59789"/>
    </ligand>
</feature>
<keyword id="KW-0963">Cytoplasm</keyword>
<keyword id="KW-0489">Methyltransferase</keyword>
<keyword id="KW-1185">Reference proteome</keyword>
<keyword id="KW-0949">S-adenosyl-L-methionine</keyword>
<keyword id="KW-0808">Transferase</keyword>
<organism>
    <name type="scientific">Rattus norvegicus</name>
    <name type="common">Rat</name>
    <dbReference type="NCBI Taxonomy" id="10116"/>
    <lineage>
        <taxon>Eukaryota</taxon>
        <taxon>Metazoa</taxon>
        <taxon>Chordata</taxon>
        <taxon>Craniata</taxon>
        <taxon>Vertebrata</taxon>
        <taxon>Euteleostomi</taxon>
        <taxon>Mammalia</taxon>
        <taxon>Eutheria</taxon>
        <taxon>Euarchontoglires</taxon>
        <taxon>Glires</taxon>
        <taxon>Rodentia</taxon>
        <taxon>Myomorpha</taxon>
        <taxon>Muroidea</taxon>
        <taxon>Muridae</taxon>
        <taxon>Murinae</taxon>
        <taxon>Rattus</taxon>
    </lineage>
</organism>
<proteinExistence type="inferred from homology"/>
<evidence type="ECO:0000250" key="1">
    <source>
        <dbReference type="UniProtKB" id="Q7Z5W3"/>
    </source>
</evidence>
<evidence type="ECO:0000255" key="2">
    <source>
        <dbReference type="PROSITE-ProRule" id="PRU00848"/>
    </source>
</evidence>
<evidence type="ECO:0000256" key="3">
    <source>
        <dbReference type="SAM" id="MobiDB-lite"/>
    </source>
</evidence>
<evidence type="ECO:0000305" key="4"/>
<evidence type="ECO:0000312" key="5">
    <source>
        <dbReference type="RGD" id="1306433"/>
    </source>
</evidence>
<dbReference type="EC" id="2.1.1.-" evidence="1"/>
<dbReference type="EMBL" id="CH474035">
    <property type="protein sequence ID" value="EDL86984.1"/>
    <property type="molecule type" value="Genomic_DNA"/>
</dbReference>
<dbReference type="RefSeq" id="NP_001102221.1">
    <property type="nucleotide sequence ID" value="NM_001108751.1"/>
</dbReference>
<dbReference type="SMR" id="D4ABH7"/>
<dbReference type="FunCoup" id="D4ABH7">
    <property type="interactions" value="1998"/>
</dbReference>
<dbReference type="STRING" id="10116.ENSRNOP00000070196"/>
<dbReference type="PhosphoSitePlus" id="D4ABH7"/>
<dbReference type="PaxDb" id="10116-ENSRNOP00000040497"/>
<dbReference type="Ensembl" id="ENSRNOT00000091538.2">
    <property type="protein sequence ID" value="ENSRNOP00000070196.1"/>
    <property type="gene ID" value="ENSRNOG00000058430.2"/>
</dbReference>
<dbReference type="GeneID" id="363001"/>
<dbReference type="KEGG" id="rno:363001"/>
<dbReference type="AGR" id="RGD:1306433"/>
<dbReference type="CTD" id="144233"/>
<dbReference type="RGD" id="1306433">
    <property type="gene designation" value="Bcdin3d"/>
</dbReference>
<dbReference type="eggNOG" id="KOG2899">
    <property type="taxonomic scope" value="Eukaryota"/>
</dbReference>
<dbReference type="GeneTree" id="ENSGT00940000153993"/>
<dbReference type="HOGENOM" id="CLU_082749_0_0_1"/>
<dbReference type="InParanoid" id="D4ABH7"/>
<dbReference type="OMA" id="LNHHDQG"/>
<dbReference type="OrthoDB" id="273070at2759"/>
<dbReference type="PhylomeDB" id="D4ABH7"/>
<dbReference type="TreeFam" id="TF324061"/>
<dbReference type="PRO" id="PR:D4ABH7"/>
<dbReference type="Proteomes" id="UP000002494">
    <property type="component" value="Chromosome 7"/>
</dbReference>
<dbReference type="Proteomes" id="UP000234681">
    <property type="component" value="Chromosome 7"/>
</dbReference>
<dbReference type="Bgee" id="ENSRNOG00000058430">
    <property type="expression patterns" value="Expressed in thymus and 20 other cell types or tissues"/>
</dbReference>
<dbReference type="GO" id="GO:0005737">
    <property type="term" value="C:cytoplasm"/>
    <property type="evidence" value="ECO:0000250"/>
    <property type="project" value="UniProtKB"/>
</dbReference>
<dbReference type="GO" id="GO:0005829">
    <property type="term" value="C:cytosol"/>
    <property type="evidence" value="ECO:0007669"/>
    <property type="project" value="Ensembl"/>
</dbReference>
<dbReference type="GO" id="GO:0005654">
    <property type="term" value="C:nucleoplasm"/>
    <property type="evidence" value="ECO:0007669"/>
    <property type="project" value="Ensembl"/>
</dbReference>
<dbReference type="GO" id="GO:0005886">
    <property type="term" value="C:plasma membrane"/>
    <property type="evidence" value="ECO:0007669"/>
    <property type="project" value="Ensembl"/>
</dbReference>
<dbReference type="GO" id="GO:0008171">
    <property type="term" value="F:O-methyltransferase activity"/>
    <property type="evidence" value="ECO:0000266"/>
    <property type="project" value="RGD"/>
</dbReference>
<dbReference type="GO" id="GO:0070883">
    <property type="term" value="F:pre-miRNA binding"/>
    <property type="evidence" value="ECO:0000266"/>
    <property type="project" value="RGD"/>
</dbReference>
<dbReference type="GO" id="GO:0008173">
    <property type="term" value="F:RNA methyltransferase activity"/>
    <property type="evidence" value="ECO:0000250"/>
    <property type="project" value="UniProtKB"/>
</dbReference>
<dbReference type="GO" id="GO:0090486">
    <property type="term" value="F:small RNA 2'-O-methyltransferase activity"/>
    <property type="evidence" value="ECO:0000250"/>
    <property type="project" value="UniProtKB"/>
</dbReference>
<dbReference type="GO" id="GO:0008175">
    <property type="term" value="F:tRNA methyltransferase activity"/>
    <property type="evidence" value="ECO:0000250"/>
    <property type="project" value="UniProtKB"/>
</dbReference>
<dbReference type="GO" id="GO:2000632">
    <property type="term" value="P:negative regulation of pre-miRNA processing"/>
    <property type="evidence" value="ECO:0000250"/>
    <property type="project" value="UniProtKB"/>
</dbReference>
<dbReference type="GO" id="GO:0031054">
    <property type="term" value="P:pre-miRNA processing"/>
    <property type="evidence" value="ECO:0000266"/>
    <property type="project" value="RGD"/>
</dbReference>
<dbReference type="GO" id="GO:0001510">
    <property type="term" value="P:RNA methylation"/>
    <property type="evidence" value="ECO:0000266"/>
    <property type="project" value="RGD"/>
</dbReference>
<dbReference type="GO" id="GO:0030488">
    <property type="term" value="P:tRNA methylation"/>
    <property type="evidence" value="ECO:0000250"/>
    <property type="project" value="UniProtKB"/>
</dbReference>
<dbReference type="FunFam" id="3.40.50.150:FF:000138">
    <property type="entry name" value="BCDIN3 domain containing RNA methyltransferase"/>
    <property type="match status" value="1"/>
</dbReference>
<dbReference type="Gene3D" id="3.40.50.150">
    <property type="entry name" value="Vaccinia Virus protein VP39"/>
    <property type="match status" value="1"/>
</dbReference>
<dbReference type="InterPro" id="IPR039772">
    <property type="entry name" value="Bin3-like"/>
</dbReference>
<dbReference type="InterPro" id="IPR010675">
    <property type="entry name" value="Bin3_C"/>
</dbReference>
<dbReference type="InterPro" id="IPR024160">
    <property type="entry name" value="BIN3_SAM-bd_dom"/>
</dbReference>
<dbReference type="InterPro" id="IPR029063">
    <property type="entry name" value="SAM-dependent_MTases_sf"/>
</dbReference>
<dbReference type="PANTHER" id="PTHR12315">
    <property type="entry name" value="BICOID-INTERACTING PROTEIN RELATED"/>
    <property type="match status" value="1"/>
</dbReference>
<dbReference type="PANTHER" id="PTHR12315:SF1">
    <property type="entry name" value="RNA 5'-MONOPHOSPHATE METHYLTRANSFERASE"/>
    <property type="match status" value="1"/>
</dbReference>
<dbReference type="Pfam" id="PF06859">
    <property type="entry name" value="Bin3"/>
    <property type="match status" value="1"/>
</dbReference>
<dbReference type="SUPFAM" id="SSF53335">
    <property type="entry name" value="S-adenosyl-L-methionine-dependent methyltransferases"/>
    <property type="match status" value="1"/>
</dbReference>
<dbReference type="PROSITE" id="PS51515">
    <property type="entry name" value="BIN3_SAM"/>
    <property type="match status" value="1"/>
</dbReference>
<sequence>MAATQELSKGGVEEAVEEDDPAALKPGAAPFGNFPHYSRFHPPEQRLRLLPPELLRQLFPPEGPERRPILGLDVGCNSGDLSMALYKHFLSPHDGETSSGTSRELRLLCCDIDPVLVERAENGCRFPDALTFITLDIMDQESRKVPLSSFLSQFGRSVFDIVFCMSVTMWIHLNHGDRGLCEFLAHVSSLCSYLLVEPQPWKCYRAAARRLRKLGLHNFDHFRSLAIRGDMASQIVRILTQDHGMELACCFGNTSWDRSLLLFRAKHTEETQAIPESSTKETGTD</sequence>
<comment type="function">
    <text evidence="1">O-methyltransferase that specifically monomethylates 5'-monophosphate of cytoplasmic histidyl tRNA (tRNA(His)), acting as a capping enzyme by protecting tRNA(His) from cleavage by DICER1. Also able, with less efficiently, to methylate the 5' monophosphate of a subset of pre-miRNAs, acting as a negative regulator of miRNA processing. The 5' monophosphate of pre-miRNAs is recognized by DICER1 and is required for pre-miRNAs processing: methylation at this position reduces the processing of pre-miRNAs by DICER1. Was also reported to mediate dimethylation of pre-miR-145; however dimethylation cannot be reproduced by another group which observes a monomethylation of pre-miR-145.</text>
</comment>
<comment type="catalytic activity">
    <reaction evidence="1">
        <text>a 5'-end 5'-phospho-ribonucleoside-RNA + S-adenosyl-L-methionine = a 5'-end (5'-methylphospho)-ribonucleoside-RNA + S-adenosyl-L-homocysteine</text>
        <dbReference type="Rhea" id="RHEA:58656"/>
        <dbReference type="Rhea" id="RHEA-COMP:15179"/>
        <dbReference type="Rhea" id="RHEA-COMP:15181"/>
        <dbReference type="ChEBI" id="CHEBI:57856"/>
        <dbReference type="ChEBI" id="CHEBI:59789"/>
        <dbReference type="ChEBI" id="CHEBI:138282"/>
        <dbReference type="ChEBI" id="CHEBI:142776"/>
    </reaction>
</comment>
<comment type="catalytic activity">
    <reaction evidence="1">
        <text>a 5'-end 5'-phospho-ribonucleoside-RNA + 2 S-adenosyl-L-methionine = a 5'-end (5'-bismethylphospho)-ribonucleoside-RNA + 2 S-adenosyl-L-homocysteine</text>
        <dbReference type="Rhea" id="RHEA:58640"/>
        <dbReference type="Rhea" id="RHEA-COMP:15179"/>
        <dbReference type="Rhea" id="RHEA-COMP:15182"/>
        <dbReference type="ChEBI" id="CHEBI:57856"/>
        <dbReference type="ChEBI" id="CHEBI:59789"/>
        <dbReference type="ChEBI" id="CHEBI:138282"/>
        <dbReference type="ChEBI" id="CHEBI:142777"/>
    </reaction>
</comment>
<comment type="subunit">
    <text evidence="1">Interacts with DICER1; the interaction may be mediated by RNA.</text>
</comment>
<comment type="subcellular location">
    <subcellularLocation>
        <location evidence="1">Cytoplasm</location>
    </subcellularLocation>
</comment>
<comment type="similarity">
    <text evidence="4">Belongs to the methyltransferase superfamily.</text>
</comment>
<accession>D4ABH7</accession>